<comment type="function">
    <text evidence="3 4">Probable transcription factor that regulates development of the tail phasmid sensory organs (PubMed:11880358). Involved in migration and differentiation of lateral neuroblasts (PubMed:28716930). Involved in control of cell fate in the T cell lineage (PubMed:11880358).</text>
</comment>
<comment type="subcellular location">
    <subcellularLocation>
        <location evidence="3">Nucleus</location>
    </subcellularLocation>
</comment>
<comment type="developmental stage">
    <text evidence="3 4">First expressed at the beginning of gastrulation at about 100 minutes; reduces in the anterior of the embryo at about 260 minutes, but persists and increases in the posterior embryo (PubMed:11880358). Expressed in comma-stage embryo in P neuroblasts and the mother cells of V5 and Q neuroblasts (PubMed:28716930). During larval development, expressed in the tail tip cells in hermaphrodites and males, and asymmetrically in descendants of the T cell lineage (PubMed:11880358).</text>
</comment>
<comment type="similarity">
    <text evidence="6">Belongs to the Elbow/Noc family.</text>
</comment>
<sequence>MVSTHSSQYITDFTPVPAEPGKSPLALLAKTCETIGLPEGSSKKNGASSSSSPQGKKDEKNHILHHQHHQQQQQSKQKSSPRSTPQSKEPTLTFPGLPKPSFPMGMPGMMQGFPFFNPMMTAYGCFPGAFPMSQGFMGAQRLPCPFAMMRQPCANPACVQCPSSSSNAAKNGQMTAEMMSQFAAHPLFSMYAGMMPGVPTSSYQALLAASAAASTSAGPTDYSNVASTSKASPQPKPTAQKSQKSAKFPCNWVDSDVPCGKVFDEENELASHVKKMHAPSPSSSASSEQSTSTGKASRSSTTTPHRFNPYGKPVAPAPPTMQQMGMNMAMNPLVLPFSLQAMYSNRLMSTVAHQ</sequence>
<organism evidence="8">
    <name type="scientific">Caenorhabditis elegans</name>
    <dbReference type="NCBI Taxonomy" id="6239"/>
    <lineage>
        <taxon>Eukaryota</taxon>
        <taxon>Metazoa</taxon>
        <taxon>Ecdysozoa</taxon>
        <taxon>Nematoda</taxon>
        <taxon>Chromadorea</taxon>
        <taxon>Rhabditida</taxon>
        <taxon>Rhabditina</taxon>
        <taxon>Rhabditomorpha</taxon>
        <taxon>Rhabditoidea</taxon>
        <taxon>Rhabditidae</taxon>
        <taxon>Peloderinae</taxon>
        <taxon>Caenorhabditis</taxon>
    </lineage>
</organism>
<protein>
    <recommendedName>
        <fullName evidence="7 9">Zinc finger protein tlp-1</fullName>
    </recommendedName>
    <alternativeName>
        <fullName evidence="5">T cell lineage defective and leptoderan tail protein</fullName>
    </alternativeName>
</protein>
<gene>
    <name evidence="9" type="primary">tlp-1</name>
    <name evidence="9" type="ORF">T23G4.1</name>
</gene>
<accession>G5EGF8</accession>
<proteinExistence type="evidence at protein level"/>
<keyword id="KW-0217">Developmental protein</keyword>
<keyword id="KW-0479">Metal-binding</keyword>
<keyword id="KW-0524">Neurogenesis</keyword>
<keyword id="KW-0539">Nucleus</keyword>
<keyword id="KW-1185">Reference proteome</keyword>
<keyword id="KW-0804">Transcription</keyword>
<keyword id="KW-0805">Transcription regulation</keyword>
<keyword id="KW-0862">Zinc</keyword>
<keyword id="KW-0863">Zinc-finger</keyword>
<name>TLP1_CAEEL</name>
<feature type="chain" id="PRO_0000451764" description="Zinc finger protein tlp-1">
    <location>
        <begin position="1"/>
        <end position="354"/>
    </location>
</feature>
<feature type="zinc finger region" description="C2H2-type" evidence="1">
    <location>
        <begin position="248"/>
        <end position="277"/>
    </location>
</feature>
<feature type="region of interest" description="Disordered" evidence="2">
    <location>
        <begin position="1"/>
        <end position="23"/>
    </location>
</feature>
<feature type="region of interest" description="Disordered" evidence="2">
    <location>
        <begin position="36"/>
        <end position="100"/>
    </location>
</feature>
<feature type="region of interest" description="Disordered" evidence="2">
    <location>
        <begin position="218"/>
        <end position="247"/>
    </location>
</feature>
<feature type="region of interest" description="Disordered" evidence="2">
    <location>
        <begin position="271"/>
        <end position="323"/>
    </location>
</feature>
<feature type="compositionally biased region" description="Polar residues" evidence="2">
    <location>
        <begin position="1"/>
        <end position="11"/>
    </location>
</feature>
<feature type="compositionally biased region" description="Low complexity" evidence="2">
    <location>
        <begin position="43"/>
        <end position="54"/>
    </location>
</feature>
<feature type="compositionally biased region" description="Low complexity" evidence="2">
    <location>
        <begin position="70"/>
        <end position="80"/>
    </location>
</feature>
<feature type="compositionally biased region" description="Polar residues" evidence="2">
    <location>
        <begin position="81"/>
        <end position="90"/>
    </location>
</feature>
<feature type="compositionally biased region" description="Polar residues" evidence="2">
    <location>
        <begin position="221"/>
        <end position="245"/>
    </location>
</feature>
<feature type="compositionally biased region" description="Low complexity" evidence="2">
    <location>
        <begin position="278"/>
        <end position="293"/>
    </location>
</feature>
<feature type="compositionally biased region" description="Polar residues" evidence="2">
    <location>
        <begin position="294"/>
        <end position="305"/>
    </location>
</feature>
<feature type="mutagenesis site" description="In mh17; pointed tail tip in males, also known as leptoderan (Lep) tail. Loss of asymmetry in the divisions of the T cell lineage daughter cells, T.p and T.ap, often resulting in loss of neural cell fates. Gross morphologies of the tail tips of hermaphrodites unaffected, but both males and hermaphrodites have defects in tail tip cell fusion. On lin-44 mutant background, polarity of the T cell division is reversed. On a lin-17 mutant background, there is a loss of cell polarity in the T cell lineages, resulting in the generation of only hypodermal cell fates." evidence="3">
    <location>
        <begin position="77"/>
        <end position="354"/>
    </location>
</feature>
<reference key="1">
    <citation type="journal article" date="2002" name="Development">
        <title>TLP-1 is an asymmetric cell fate determinant that responds to Wnt signals and controls male tail tip morphogenesis in C. elegans.</title>
        <authorList>
            <person name="Zhao X."/>
            <person name="Yang Y."/>
            <person name="Fitch D.H.A."/>
            <person name="Herman M.A."/>
        </authorList>
    </citation>
    <scope>NUCLEOTIDE SEQUENCE [MRNA]</scope>
    <scope>FUNCTION</scope>
    <scope>SUBCELLULAR LOCATION</scope>
    <scope>DEVELOPMENTAL STAGE</scope>
    <scope>MUTAGENESIS OF 77-GLN--GLN-354</scope>
</reference>
<reference key="2">
    <citation type="journal article" date="1998" name="Science">
        <title>Genome sequence of the nematode C. elegans: a platform for investigating biology.</title>
        <authorList>
            <consortium name="The C. elegans sequencing consortium"/>
        </authorList>
    </citation>
    <scope>NUCLEOTIDE SEQUENCE [LARGE SCALE GENOMIC DNA]</scope>
    <source>
        <strain evidence="8">Bristol N2</strain>
    </source>
</reference>
<reference key="3">
    <citation type="journal article" date="2017" name="Proc. Natl. Acad. Sci. U.S.A.">
        <title>Conserved gene regulatory module specifies lateral neural borders across bilaterians.</title>
        <authorList>
            <person name="Li Y."/>
            <person name="Zhao D."/>
            <person name="Horie T."/>
            <person name="Chen G."/>
            <person name="Bao H."/>
            <person name="Chen S."/>
            <person name="Liu W."/>
            <person name="Horie R."/>
            <person name="Liang T."/>
            <person name="Dong B."/>
            <person name="Feng Q."/>
            <person name="Tao Q."/>
            <person name="Liu X."/>
        </authorList>
    </citation>
    <scope>FUNCTION</scope>
    <scope>DEVELOPMENTAL STAGE</scope>
</reference>
<dbReference type="EMBL" id="AY046083">
    <property type="protein sequence ID" value="AAL02420.1"/>
    <property type="molecule type" value="mRNA"/>
</dbReference>
<dbReference type="EMBL" id="BX284604">
    <property type="protein sequence ID" value="CAB05282.1"/>
    <property type="molecule type" value="Genomic_DNA"/>
</dbReference>
<dbReference type="PIR" id="T25198">
    <property type="entry name" value="T25198"/>
</dbReference>
<dbReference type="RefSeq" id="NP_502647.1">
    <property type="nucleotide sequence ID" value="NM_070246.5"/>
</dbReference>
<dbReference type="FunCoup" id="G5EGF8">
    <property type="interactions" value="255"/>
</dbReference>
<dbReference type="IntAct" id="G5EGF8">
    <property type="interactions" value="3"/>
</dbReference>
<dbReference type="STRING" id="6239.T23G4.1.1"/>
<dbReference type="PaxDb" id="6239-T23G4.1"/>
<dbReference type="EnsemblMetazoa" id="T23G4.1.1">
    <property type="protein sequence ID" value="T23G4.1.1"/>
    <property type="gene ID" value="WBGene00006580"/>
</dbReference>
<dbReference type="GeneID" id="178338"/>
<dbReference type="KEGG" id="cel:CELE_T23G4.1"/>
<dbReference type="AGR" id="WB:WBGene00006580"/>
<dbReference type="CTD" id="178338"/>
<dbReference type="WormBase" id="T23G4.1">
    <property type="protein sequence ID" value="CE16453"/>
    <property type="gene ID" value="WBGene00006580"/>
    <property type="gene designation" value="tlp-1"/>
</dbReference>
<dbReference type="eggNOG" id="ENOG502TG3K">
    <property type="taxonomic scope" value="Eukaryota"/>
</dbReference>
<dbReference type="GeneTree" id="ENSGT00390000014618"/>
<dbReference type="HOGENOM" id="CLU_726251_0_0_1"/>
<dbReference type="InParanoid" id="G5EGF8"/>
<dbReference type="OMA" id="MATMPHP"/>
<dbReference type="OrthoDB" id="5874052at2759"/>
<dbReference type="SignaLink" id="G5EGF8"/>
<dbReference type="PRO" id="PR:G5EGF8"/>
<dbReference type="Proteomes" id="UP000001940">
    <property type="component" value="Chromosome IV"/>
</dbReference>
<dbReference type="Bgee" id="WBGene00006580">
    <property type="expression patterns" value="Expressed in embryo and 3 other cell types or tissues"/>
</dbReference>
<dbReference type="GO" id="GO:0005634">
    <property type="term" value="C:nucleus"/>
    <property type="evidence" value="ECO:0000314"/>
    <property type="project" value="UniProtKB"/>
</dbReference>
<dbReference type="GO" id="GO:0008270">
    <property type="term" value="F:zinc ion binding"/>
    <property type="evidence" value="ECO:0007669"/>
    <property type="project" value="UniProtKB-KW"/>
</dbReference>
<dbReference type="GO" id="GO:0007399">
    <property type="term" value="P:nervous system development"/>
    <property type="evidence" value="ECO:0007669"/>
    <property type="project" value="UniProtKB-KW"/>
</dbReference>
<dbReference type="GO" id="GO:0045944">
    <property type="term" value="P:positive regulation of transcription by RNA polymerase II"/>
    <property type="evidence" value="ECO:0000315"/>
    <property type="project" value="WormBase"/>
</dbReference>
<dbReference type="InterPro" id="IPR051520">
    <property type="entry name" value="Elbow/Noc_ZnFinger"/>
</dbReference>
<dbReference type="InterPro" id="IPR013087">
    <property type="entry name" value="Znf_C2H2_type"/>
</dbReference>
<dbReference type="PANTHER" id="PTHR12522:SF4">
    <property type="entry name" value="ZINC FINGER PROTEIN ELBOW"/>
    <property type="match status" value="1"/>
</dbReference>
<dbReference type="PANTHER" id="PTHR12522">
    <property type="entry name" value="ZINC-FINGER PROTEIN NOLZ1-RELATED"/>
    <property type="match status" value="1"/>
</dbReference>
<dbReference type="PROSITE" id="PS50157">
    <property type="entry name" value="ZINC_FINGER_C2H2_2"/>
    <property type="match status" value="1"/>
</dbReference>
<evidence type="ECO:0000255" key="1">
    <source>
        <dbReference type="PROSITE-ProRule" id="PRU00042"/>
    </source>
</evidence>
<evidence type="ECO:0000256" key="2">
    <source>
        <dbReference type="SAM" id="MobiDB-lite"/>
    </source>
</evidence>
<evidence type="ECO:0000269" key="3">
    <source>
    </source>
</evidence>
<evidence type="ECO:0000269" key="4">
    <source>
    </source>
</evidence>
<evidence type="ECO:0000303" key="5">
    <source>
    </source>
</evidence>
<evidence type="ECO:0000305" key="6"/>
<evidence type="ECO:0000312" key="7">
    <source>
        <dbReference type="EMBL" id="AAL02420.1"/>
    </source>
</evidence>
<evidence type="ECO:0000312" key="8">
    <source>
        <dbReference type="Proteomes" id="UP000001940"/>
    </source>
</evidence>
<evidence type="ECO:0000312" key="9">
    <source>
        <dbReference type="WormBase" id="T23G4.1"/>
    </source>
</evidence>